<proteinExistence type="inferred from homology"/>
<dbReference type="EMBL" id="AE014075">
    <property type="protein sequence ID" value="AAN83046.1"/>
    <property type="status" value="ALT_INIT"/>
    <property type="molecule type" value="Genomic_DNA"/>
</dbReference>
<dbReference type="RefSeq" id="WP_001529490.1">
    <property type="nucleotide sequence ID" value="NZ_CP051263.1"/>
</dbReference>
<dbReference type="SMR" id="Q8CVK0"/>
<dbReference type="STRING" id="199310.c4611"/>
<dbReference type="KEGG" id="ecc:c4611"/>
<dbReference type="eggNOG" id="COG0644">
    <property type="taxonomic scope" value="Bacteria"/>
</dbReference>
<dbReference type="HOGENOM" id="CLU_024648_1_0_6"/>
<dbReference type="Proteomes" id="UP000001410">
    <property type="component" value="Chromosome"/>
</dbReference>
<dbReference type="GO" id="GO:0071949">
    <property type="term" value="F:FAD binding"/>
    <property type="evidence" value="ECO:0007669"/>
    <property type="project" value="InterPro"/>
</dbReference>
<dbReference type="FunFam" id="3.50.50.60:FF:000151">
    <property type="entry name" value="Protein CbrA"/>
    <property type="match status" value="1"/>
</dbReference>
<dbReference type="Gene3D" id="3.50.50.60">
    <property type="entry name" value="FAD/NAD(P)-binding domain"/>
    <property type="match status" value="1"/>
</dbReference>
<dbReference type="InterPro" id="IPR002938">
    <property type="entry name" value="FAD-bd"/>
</dbReference>
<dbReference type="InterPro" id="IPR036188">
    <property type="entry name" value="FAD/NAD-bd_sf"/>
</dbReference>
<dbReference type="InterPro" id="IPR050407">
    <property type="entry name" value="Geranylgeranyl_reductase"/>
</dbReference>
<dbReference type="NCBIfam" id="NF008519">
    <property type="entry name" value="PRK11445.1"/>
    <property type="match status" value="1"/>
</dbReference>
<dbReference type="PANTHER" id="PTHR42685:SF22">
    <property type="entry name" value="CONDITIONED MEDIUM FACTOR RECEPTOR 1"/>
    <property type="match status" value="1"/>
</dbReference>
<dbReference type="PANTHER" id="PTHR42685">
    <property type="entry name" value="GERANYLGERANYL DIPHOSPHATE REDUCTASE"/>
    <property type="match status" value="1"/>
</dbReference>
<dbReference type="Pfam" id="PF01494">
    <property type="entry name" value="FAD_binding_3"/>
    <property type="match status" value="1"/>
</dbReference>
<dbReference type="PRINTS" id="PR00420">
    <property type="entry name" value="RNGMNOXGNASE"/>
</dbReference>
<dbReference type="SUPFAM" id="SSF51905">
    <property type="entry name" value="FAD/NAD(P)-binding domain"/>
    <property type="match status" value="1"/>
</dbReference>
<protein>
    <recommendedName>
        <fullName>Protein CbrA</fullName>
    </recommendedName>
</protein>
<feature type="chain" id="PRO_0000320283" description="Protein CbrA">
    <location>
        <begin position="1"/>
        <end position="366"/>
    </location>
</feature>
<sequence>MEHFDVAIIGLGPAGSALARKLAGKMQVIALDKKHQHGTEGFSKPCGGLLAPDAQRSFIRDGLTLPVDVIANPQIFSVKTVDVAASLTRNYQRSYININRHAFDLWMKSLIPASVEVYHDSLCRKIWREDDKWHVIFRADGWEQHITARYLVGADGANSMVRRHLYPDHQIRKYVAIQQWFAEKHPVPFYSCIFDNAITDCYSWSISKDGYFIFGGAYPMKDGQTRFTTLKEKMSAFQFQFGKAVKSEKCTVLFPSRWQDFVCGKDNAFLIGEAAGFISASSLEGISYALDSAEILRSVLLKQPEKLNTAYRRATRKLRLKLFGKIVKSRCLTAPALRKWIMRSGVAHIPQLKDYPTRFTSPTSRM</sequence>
<organism>
    <name type="scientific">Escherichia coli O6:H1 (strain CFT073 / ATCC 700928 / UPEC)</name>
    <dbReference type="NCBI Taxonomy" id="199310"/>
    <lineage>
        <taxon>Bacteria</taxon>
        <taxon>Pseudomonadati</taxon>
        <taxon>Pseudomonadota</taxon>
        <taxon>Gammaproteobacteria</taxon>
        <taxon>Enterobacterales</taxon>
        <taxon>Enterobacteriaceae</taxon>
        <taxon>Escherichia</taxon>
    </lineage>
</organism>
<gene>
    <name type="primary">cbrA</name>
    <name type="ordered locus">c4611</name>
</gene>
<comment type="similarity">
    <text evidence="1">Belongs to the CbrA family.</text>
</comment>
<comment type="sequence caution" evidence="1">
    <conflict type="erroneous initiation">
        <sequence resource="EMBL-CDS" id="AAN83046"/>
    </conflict>
</comment>
<evidence type="ECO:0000305" key="1"/>
<keyword id="KW-1185">Reference proteome</keyword>
<name>CBRA_ECOL6</name>
<reference key="1">
    <citation type="journal article" date="2002" name="Proc. Natl. Acad. Sci. U.S.A.">
        <title>Extensive mosaic structure revealed by the complete genome sequence of uropathogenic Escherichia coli.</title>
        <authorList>
            <person name="Welch R.A."/>
            <person name="Burland V."/>
            <person name="Plunkett G. III"/>
            <person name="Redford P."/>
            <person name="Roesch P."/>
            <person name="Rasko D."/>
            <person name="Buckles E.L."/>
            <person name="Liou S.-R."/>
            <person name="Boutin A."/>
            <person name="Hackett J."/>
            <person name="Stroud D."/>
            <person name="Mayhew G.F."/>
            <person name="Rose D.J."/>
            <person name="Zhou S."/>
            <person name="Schwartz D.C."/>
            <person name="Perna N.T."/>
            <person name="Mobley H.L.T."/>
            <person name="Donnenberg M.S."/>
            <person name="Blattner F.R."/>
        </authorList>
    </citation>
    <scope>NUCLEOTIDE SEQUENCE [LARGE SCALE GENOMIC DNA]</scope>
    <source>
        <strain>CFT073 / ATCC 700928 / UPEC</strain>
    </source>
</reference>
<accession>Q8CVK0</accession>